<gene>
    <name type="ordered locus">AF_1488</name>
</gene>
<accession>O28784</accession>
<keyword id="KW-0548">Nucleotidyltransferase</keyword>
<keyword id="KW-1185">Reference proteome</keyword>
<keyword id="KW-0808">Transferase</keyword>
<evidence type="ECO:0000305" key="1"/>
<reference key="1">
    <citation type="journal article" date="1997" name="Nature">
        <title>The complete genome sequence of the hyperthermophilic, sulphate-reducing archaeon Archaeoglobus fulgidus.</title>
        <authorList>
            <person name="Klenk H.-P."/>
            <person name="Clayton R.A."/>
            <person name="Tomb J.-F."/>
            <person name="White O."/>
            <person name="Nelson K.E."/>
            <person name="Ketchum K.A."/>
            <person name="Dodson R.J."/>
            <person name="Gwinn M.L."/>
            <person name="Hickey E.K."/>
            <person name="Peterson J.D."/>
            <person name="Richardson D.L."/>
            <person name="Kerlavage A.R."/>
            <person name="Graham D.E."/>
            <person name="Kyrpides N.C."/>
            <person name="Fleischmann R.D."/>
            <person name="Quackenbush J."/>
            <person name="Lee N.H."/>
            <person name="Sutton G.G."/>
            <person name="Gill S.R."/>
            <person name="Kirkness E.F."/>
            <person name="Dougherty B.A."/>
            <person name="McKenney K."/>
            <person name="Adams M.D."/>
            <person name="Loftus B.J."/>
            <person name="Peterson S.N."/>
            <person name="Reich C.I."/>
            <person name="McNeil L.K."/>
            <person name="Badger J.H."/>
            <person name="Glodek A."/>
            <person name="Zhou L."/>
            <person name="Overbeek R."/>
            <person name="Gocayne J.D."/>
            <person name="Weidman J.F."/>
            <person name="McDonald L.A."/>
            <person name="Utterback T.R."/>
            <person name="Cotton M.D."/>
            <person name="Spriggs T."/>
            <person name="Artiach P."/>
            <person name="Kaine B.P."/>
            <person name="Sykes S.M."/>
            <person name="Sadow P.W."/>
            <person name="D'Andrea K.P."/>
            <person name="Bowman C."/>
            <person name="Fujii C."/>
            <person name="Garland S.A."/>
            <person name="Mason T.M."/>
            <person name="Olsen G.J."/>
            <person name="Fraser C.M."/>
            <person name="Smith H.O."/>
            <person name="Woese C.R."/>
            <person name="Venter J.C."/>
        </authorList>
    </citation>
    <scope>NUCLEOTIDE SEQUENCE [LARGE SCALE GENOMIC DNA]</scope>
    <source>
        <strain>ATCC 49558 / DSM 4304 / JCM 9628 / NBRC 100126 / VC-16</strain>
    </source>
</reference>
<name>Y1488_ARCFU</name>
<dbReference type="EMBL" id="AE000782">
    <property type="protein sequence ID" value="AAB89761.1"/>
    <property type="molecule type" value="Genomic_DNA"/>
</dbReference>
<dbReference type="PIR" id="G69435">
    <property type="entry name" value="G69435"/>
</dbReference>
<dbReference type="RefSeq" id="WP_010878985.1">
    <property type="nucleotide sequence ID" value="NC_000917.1"/>
</dbReference>
<dbReference type="SMR" id="O28784"/>
<dbReference type="STRING" id="224325.AF_1488"/>
<dbReference type="PaxDb" id="224325-AF_1488"/>
<dbReference type="EnsemblBacteria" id="AAB89761">
    <property type="protein sequence ID" value="AAB89761"/>
    <property type="gene ID" value="AF_1488"/>
</dbReference>
<dbReference type="KEGG" id="afu:AF_1488"/>
<dbReference type="eggNOG" id="arCOG00972">
    <property type="taxonomic scope" value="Archaea"/>
</dbReference>
<dbReference type="HOGENOM" id="CLU_108783_0_0_2"/>
<dbReference type="OrthoDB" id="264480at2157"/>
<dbReference type="PhylomeDB" id="O28784"/>
<dbReference type="Proteomes" id="UP000002199">
    <property type="component" value="Chromosome"/>
</dbReference>
<dbReference type="GO" id="GO:0005737">
    <property type="term" value="C:cytoplasm"/>
    <property type="evidence" value="ECO:0007669"/>
    <property type="project" value="UniProtKB-UniRule"/>
</dbReference>
<dbReference type="GO" id="GO:0000309">
    <property type="term" value="F:nicotinamide-nucleotide adenylyltransferase activity"/>
    <property type="evidence" value="ECO:0007669"/>
    <property type="project" value="UniProtKB-UniRule"/>
</dbReference>
<dbReference type="GO" id="GO:0009435">
    <property type="term" value="P:NAD biosynthetic process"/>
    <property type="evidence" value="ECO:0007669"/>
    <property type="project" value="UniProtKB-UniRule"/>
</dbReference>
<dbReference type="CDD" id="cd02166">
    <property type="entry name" value="NMNAT_Archaea"/>
    <property type="match status" value="1"/>
</dbReference>
<dbReference type="Gene3D" id="3.40.50.620">
    <property type="entry name" value="HUPs"/>
    <property type="match status" value="1"/>
</dbReference>
<dbReference type="HAMAP" id="MF_00243">
    <property type="entry name" value="NMN_adenylyltr"/>
    <property type="match status" value="1"/>
</dbReference>
<dbReference type="InterPro" id="IPR004821">
    <property type="entry name" value="Cyt_trans-like"/>
</dbReference>
<dbReference type="InterPro" id="IPR006418">
    <property type="entry name" value="NMN_Atrans_arc"/>
</dbReference>
<dbReference type="InterPro" id="IPR014729">
    <property type="entry name" value="Rossmann-like_a/b/a_fold"/>
</dbReference>
<dbReference type="NCBIfam" id="TIGR00125">
    <property type="entry name" value="cyt_tran_rel"/>
    <property type="match status" value="1"/>
</dbReference>
<dbReference type="NCBIfam" id="NF002243">
    <property type="entry name" value="PRK01153.1"/>
    <property type="match status" value="1"/>
</dbReference>
<dbReference type="PANTHER" id="PTHR21342:SF0">
    <property type="entry name" value="BIFUNCTIONAL NMN ADENYLYLTRANSFERASE_NUDIX HYDROLASE"/>
    <property type="match status" value="1"/>
</dbReference>
<dbReference type="PANTHER" id="PTHR21342">
    <property type="entry name" value="PHOSPHOPANTETHEINE ADENYLYLTRANSFERASE"/>
    <property type="match status" value="1"/>
</dbReference>
<dbReference type="Pfam" id="PF01467">
    <property type="entry name" value="CTP_transf_like"/>
    <property type="match status" value="1"/>
</dbReference>
<dbReference type="SUPFAM" id="SSF52374">
    <property type="entry name" value="Nucleotidylyl transferase"/>
    <property type="match status" value="1"/>
</dbReference>
<organism>
    <name type="scientific">Archaeoglobus fulgidus (strain ATCC 49558 / DSM 4304 / JCM 9628 / NBRC 100126 / VC-16)</name>
    <dbReference type="NCBI Taxonomy" id="224325"/>
    <lineage>
        <taxon>Archaea</taxon>
        <taxon>Methanobacteriati</taxon>
        <taxon>Methanobacteriota</taxon>
        <taxon>Archaeoglobi</taxon>
        <taxon>Archaeoglobales</taxon>
        <taxon>Archaeoglobaceae</taxon>
        <taxon>Archaeoglobus</taxon>
    </lineage>
</organism>
<protein>
    <recommendedName>
        <fullName>Uncharacterized protein AF_1488</fullName>
    </recommendedName>
</protein>
<feature type="chain" id="PRO_0000135010" description="Uncharacterized protein AF_1488">
    <location>
        <begin position="1"/>
        <end position="174"/>
    </location>
</feature>
<comment type="similarity">
    <text evidence="1">Belongs to the archaeal NMN adenylyltransferase family.</text>
</comment>
<proteinExistence type="inferred from homology"/>
<sequence>MARPLRALIFGRFQPFHLGHLKVTKWALEKFDELVLLVGMANESHTVLNPFTAGERIWMMREALKDEGVDLSRIITATVPTMSVYVGHAFYIINLVPKVDSIITRNPVIAQVFHDAGLEVIAPPEFDRNLYRGSYIRKLMLEDGNWRELVPKKVAAIIDEIGGVERLKKAASRD</sequence>